<comment type="catalytic activity">
    <reaction evidence="1">
        <text>tRNA(Gly) + glycine + ATP = glycyl-tRNA(Gly) + AMP + diphosphate</text>
        <dbReference type="Rhea" id="RHEA:16013"/>
        <dbReference type="Rhea" id="RHEA-COMP:9664"/>
        <dbReference type="Rhea" id="RHEA-COMP:9683"/>
        <dbReference type="ChEBI" id="CHEBI:30616"/>
        <dbReference type="ChEBI" id="CHEBI:33019"/>
        <dbReference type="ChEBI" id="CHEBI:57305"/>
        <dbReference type="ChEBI" id="CHEBI:78442"/>
        <dbReference type="ChEBI" id="CHEBI:78522"/>
        <dbReference type="ChEBI" id="CHEBI:456215"/>
        <dbReference type="EC" id="6.1.1.14"/>
    </reaction>
</comment>
<comment type="subunit">
    <text evidence="1">Tetramer of two alpha and two beta subunits.</text>
</comment>
<comment type="subcellular location">
    <subcellularLocation>
        <location evidence="1">Cytoplasm</location>
    </subcellularLocation>
</comment>
<comment type="similarity">
    <text evidence="1">Belongs to the class-II aminoacyl-tRNA synthetase family.</text>
</comment>
<organism>
    <name type="scientific">Neisseria meningitidis serogroup A / serotype 4A (strain DSM 15465 / Z2491)</name>
    <dbReference type="NCBI Taxonomy" id="122587"/>
    <lineage>
        <taxon>Bacteria</taxon>
        <taxon>Pseudomonadati</taxon>
        <taxon>Pseudomonadota</taxon>
        <taxon>Betaproteobacteria</taxon>
        <taxon>Neisseriales</taxon>
        <taxon>Neisseriaceae</taxon>
        <taxon>Neisseria</taxon>
    </lineage>
</organism>
<evidence type="ECO:0000255" key="1">
    <source>
        <dbReference type="HAMAP-Rule" id="MF_00254"/>
    </source>
</evidence>
<accession>P67028</accession>
<accession>A1IPX7</accession>
<accession>Q9JRC6</accession>
<protein>
    <recommendedName>
        <fullName evidence="1">Glycine--tRNA ligase alpha subunit</fullName>
        <ecNumber evidence="1">6.1.1.14</ecNumber>
    </recommendedName>
    <alternativeName>
        <fullName evidence="1">Glycyl-tRNA synthetase alpha subunit</fullName>
        <shortName evidence="1">GlyRS</shortName>
    </alternativeName>
</protein>
<keyword id="KW-0030">Aminoacyl-tRNA synthetase</keyword>
<keyword id="KW-0067">ATP-binding</keyword>
<keyword id="KW-0963">Cytoplasm</keyword>
<keyword id="KW-0436">Ligase</keyword>
<keyword id="KW-0547">Nucleotide-binding</keyword>
<keyword id="KW-0648">Protein biosynthesis</keyword>
<sequence>MLTFQQIIFKLQTFWADKGCTVIQPFDMEVGAGTSHPATCLRALGPEPWFAAYVQPSRRPKDGRYGDNPNRLQHYYQFQVALKPAPANIQDLYLDSLRELGIDPKVHDIRFVEDDWENPTLGAWGLGWEVWLNGMEVTQFTYFQQVGGIDCTPVLGEITYGIERLAMYLQGVENVYDLVWAKTLDGNTVTYGDVYHQNEVEQSTYNFEYSDADWLLRQFNDYEAQAKRLLAEENAALALPAYELVLKAGHTFNLLDARGAISVTERATYIGRIRALSRAVAQKYVESREKLGFPLMKANAA</sequence>
<dbReference type="EC" id="6.1.1.14" evidence="1"/>
<dbReference type="EMBL" id="AL157959">
    <property type="protein sequence ID" value="CAM07798.1"/>
    <property type="molecule type" value="Genomic_DNA"/>
</dbReference>
<dbReference type="RefSeq" id="WP_002218046.1">
    <property type="nucleotide sequence ID" value="NC_003116.1"/>
</dbReference>
<dbReference type="SMR" id="P67028"/>
<dbReference type="EnsemblBacteria" id="CAM07798">
    <property type="protein sequence ID" value="CAM07798"/>
    <property type="gene ID" value="NMA0521"/>
</dbReference>
<dbReference type="GeneID" id="93386838"/>
<dbReference type="KEGG" id="nma:NMA0521"/>
<dbReference type="HOGENOM" id="CLU_057066_1_0_4"/>
<dbReference type="Proteomes" id="UP000000626">
    <property type="component" value="Chromosome"/>
</dbReference>
<dbReference type="GO" id="GO:0005829">
    <property type="term" value="C:cytosol"/>
    <property type="evidence" value="ECO:0007669"/>
    <property type="project" value="TreeGrafter"/>
</dbReference>
<dbReference type="GO" id="GO:0005524">
    <property type="term" value="F:ATP binding"/>
    <property type="evidence" value="ECO:0007669"/>
    <property type="project" value="UniProtKB-UniRule"/>
</dbReference>
<dbReference type="GO" id="GO:0004820">
    <property type="term" value="F:glycine-tRNA ligase activity"/>
    <property type="evidence" value="ECO:0007669"/>
    <property type="project" value="UniProtKB-UniRule"/>
</dbReference>
<dbReference type="GO" id="GO:0006426">
    <property type="term" value="P:glycyl-tRNA aminoacylation"/>
    <property type="evidence" value="ECO:0007669"/>
    <property type="project" value="UniProtKB-UniRule"/>
</dbReference>
<dbReference type="CDD" id="cd00733">
    <property type="entry name" value="GlyRS_alpha_core"/>
    <property type="match status" value="1"/>
</dbReference>
<dbReference type="FunFam" id="3.30.930.10:FF:000006">
    <property type="entry name" value="Glycine--tRNA ligase alpha subunit"/>
    <property type="match status" value="1"/>
</dbReference>
<dbReference type="Gene3D" id="3.30.930.10">
    <property type="entry name" value="Bira Bifunctional Protein, Domain 2"/>
    <property type="match status" value="1"/>
</dbReference>
<dbReference type="Gene3D" id="1.20.58.180">
    <property type="entry name" value="Class II aaRS and biotin synthetases, domain 2"/>
    <property type="match status" value="1"/>
</dbReference>
<dbReference type="HAMAP" id="MF_00254">
    <property type="entry name" value="Gly_tRNA_synth_alpha"/>
    <property type="match status" value="1"/>
</dbReference>
<dbReference type="InterPro" id="IPR045864">
    <property type="entry name" value="aa-tRNA-synth_II/BPL/LPL"/>
</dbReference>
<dbReference type="InterPro" id="IPR006194">
    <property type="entry name" value="Gly-tRNA-synth_heterodimer"/>
</dbReference>
<dbReference type="InterPro" id="IPR002310">
    <property type="entry name" value="Gly-tRNA_ligase_asu"/>
</dbReference>
<dbReference type="NCBIfam" id="TIGR00388">
    <property type="entry name" value="glyQ"/>
    <property type="match status" value="1"/>
</dbReference>
<dbReference type="NCBIfam" id="NF006827">
    <property type="entry name" value="PRK09348.1"/>
    <property type="match status" value="1"/>
</dbReference>
<dbReference type="PANTHER" id="PTHR30075:SF2">
    <property type="entry name" value="GLYCINE--TRNA LIGASE, CHLOROPLASTIC_MITOCHONDRIAL 2"/>
    <property type="match status" value="1"/>
</dbReference>
<dbReference type="PANTHER" id="PTHR30075">
    <property type="entry name" value="GLYCYL-TRNA SYNTHETASE"/>
    <property type="match status" value="1"/>
</dbReference>
<dbReference type="Pfam" id="PF02091">
    <property type="entry name" value="tRNA-synt_2e"/>
    <property type="match status" value="1"/>
</dbReference>
<dbReference type="PRINTS" id="PR01044">
    <property type="entry name" value="TRNASYNTHGA"/>
</dbReference>
<dbReference type="SUPFAM" id="SSF55681">
    <property type="entry name" value="Class II aaRS and biotin synthetases"/>
    <property type="match status" value="1"/>
</dbReference>
<dbReference type="PROSITE" id="PS50861">
    <property type="entry name" value="AA_TRNA_LIGASE_II_GLYAB"/>
    <property type="match status" value="1"/>
</dbReference>
<proteinExistence type="inferred from homology"/>
<reference key="1">
    <citation type="journal article" date="2000" name="Nature">
        <title>Complete DNA sequence of a serogroup A strain of Neisseria meningitidis Z2491.</title>
        <authorList>
            <person name="Parkhill J."/>
            <person name="Achtman M."/>
            <person name="James K.D."/>
            <person name="Bentley S.D."/>
            <person name="Churcher C.M."/>
            <person name="Klee S.R."/>
            <person name="Morelli G."/>
            <person name="Basham D."/>
            <person name="Brown D."/>
            <person name="Chillingworth T."/>
            <person name="Davies R.M."/>
            <person name="Davis P."/>
            <person name="Devlin K."/>
            <person name="Feltwell T."/>
            <person name="Hamlin N."/>
            <person name="Holroyd S."/>
            <person name="Jagels K."/>
            <person name="Leather S."/>
            <person name="Moule S."/>
            <person name="Mungall K.L."/>
            <person name="Quail M.A."/>
            <person name="Rajandream M.A."/>
            <person name="Rutherford K.M."/>
            <person name="Simmonds M."/>
            <person name="Skelton J."/>
            <person name="Whitehead S."/>
            <person name="Spratt B.G."/>
            <person name="Barrell B.G."/>
        </authorList>
    </citation>
    <scope>NUCLEOTIDE SEQUENCE [LARGE SCALE GENOMIC DNA]</scope>
    <source>
        <strain>DSM 15465 / Z2491</strain>
    </source>
</reference>
<name>SYGA_NEIMA</name>
<feature type="chain" id="PRO_0000072850" description="Glycine--tRNA ligase alpha subunit">
    <location>
        <begin position="1"/>
        <end position="301"/>
    </location>
</feature>
<gene>
    <name evidence="1" type="primary">glyQ</name>
    <name type="ordered locus">NMA0521</name>
</gene>